<accession>P17638</accession>
<accession>Q3T4L6</accession>
<organismHost>
    <name type="scientific">Acinetobacter calcoaceticus</name>
    <dbReference type="NCBI Taxonomy" id="471"/>
</organismHost>
<organismHost>
    <name type="scientific">Escherichia coli</name>
    <dbReference type="NCBI Taxonomy" id="562"/>
</organismHost>
<organismHost>
    <name type="scientific">Proteus mirabilis</name>
    <dbReference type="NCBI Taxonomy" id="584"/>
</organismHost>
<organismHost>
    <name type="scientific">Pseudomonas aeruginosa</name>
    <dbReference type="NCBI Taxonomy" id="287"/>
</organismHost>
<organismHost>
    <name type="scientific">Pseudomonas fluorescens</name>
    <dbReference type="NCBI Taxonomy" id="294"/>
</organismHost>
<organismHost>
    <name type="scientific">Pseudomonas putida</name>
    <name type="common">Arthrobacter siderocapsulatus</name>
    <dbReference type="NCBI Taxonomy" id="303"/>
</organismHost>
<organismHost>
    <name type="scientific">Salmonella typhimurium</name>
    <dbReference type="NCBI Taxonomy" id="90371"/>
</organismHost>
<organismHost>
    <name type="scientific">Vibrio cholerae</name>
    <dbReference type="NCBI Taxonomy" id="666"/>
</organismHost>
<feature type="chain" id="PRO_0000165356" description="Protein P19">
    <location>
        <begin position="1"/>
        <end position="94"/>
    </location>
</feature>
<feature type="sequence conflict" description="In Ref. 2." evidence="1" ref="2">
    <original>YQVKGAIR</original>
    <variation>IKSRALSA</variation>
    <location>
        <begin position="45"/>
        <end position="52"/>
    </location>
</feature>
<feature type="sequence conflict" description="In Ref. 2." evidence="1" ref="2">
    <location>
        <begin position="53"/>
        <end position="94"/>
    </location>
</feature>
<dbReference type="EMBL" id="M33428">
    <property type="protein sequence ID" value="AAA32448.1"/>
    <property type="molecule type" value="Genomic_DNA"/>
</dbReference>
<dbReference type="EMBL" id="M30146">
    <property type="protein sequence ID" value="AAA32454.1"/>
    <property type="molecule type" value="Genomic_DNA"/>
</dbReference>
<dbReference type="EMBL" id="AY848689">
    <property type="protein sequence ID" value="AAX45912.1"/>
    <property type="molecule type" value="Genomic_DNA"/>
</dbReference>
<dbReference type="PIR" id="JQ0187">
    <property type="entry name" value="JQ0187"/>
</dbReference>
<dbReference type="RefSeq" id="NP_040701.1">
    <property type="nucleotide sequence ID" value="NC_001421.2"/>
</dbReference>
<dbReference type="RefSeq" id="YP_009639984.1">
    <property type="nucleotide sequence ID" value="NC_001421.2"/>
</dbReference>
<dbReference type="GeneID" id="1260936"/>
<dbReference type="OrthoDB" id="32725at10239"/>
<dbReference type="Proteomes" id="UP000002143">
    <property type="component" value="Segment"/>
</dbReference>
<dbReference type="GO" id="GO:0003677">
    <property type="term" value="F:DNA binding"/>
    <property type="evidence" value="ECO:0007669"/>
    <property type="project" value="UniProtKB-KW"/>
</dbReference>
<dbReference type="GO" id="GO:0000166">
    <property type="term" value="F:nucleotide binding"/>
    <property type="evidence" value="ECO:0007669"/>
    <property type="project" value="UniProtKB-KW"/>
</dbReference>
<comment type="function">
    <text>Binds to single-stranded DNA (ssDNA).</text>
</comment>
<reference key="1">
    <citation type="journal article" date="1989" name="Gene">
        <title>The organization of the right-end early region of bacteriophage PRD1 genome.</title>
        <authorList>
            <person name="Pakula T.M."/>
            <person name="Savilahti H."/>
            <person name="Bamford D.H."/>
        </authorList>
    </citation>
    <scope>NUCLEOTIDE SEQUENCE [GENOMIC DNA]</scope>
</reference>
<reference key="2">
    <citation type="journal article" date="1990" name="J. Bacteriol.">
        <title>Nucleotide sequence and transcription of the right early region of bacteriophage PRD1.</title>
        <authorList>
            <person name="Gerendasy D."/>
            <person name="Ito J."/>
        </authorList>
    </citation>
    <scope>NUCLEOTIDE SEQUENCE [GENOMIC DNA]</scope>
</reference>
<reference key="3">
    <citation type="journal article" date="1991" name="Virology">
        <title>Genome organization of membrane-containing bacteriophage PRD1.</title>
        <authorList>
            <person name="Bamford J.K.H."/>
            <person name="Haenninen A.-L."/>
            <person name="Pakula T.M."/>
            <person name="Ojala P.M."/>
            <person name="Kalkkinen N."/>
            <person name="Frilander M."/>
            <person name="Bamford D.H."/>
        </authorList>
    </citation>
    <scope>NUCLEOTIDE SEQUENCE [GENOMIC DNA]</scope>
</reference>
<reference key="4">
    <citation type="journal article" date="2005" name="J. Mol. Biol.">
        <title>A snapshot of viral evolution from genome analysis of the tectiviridae family.</title>
        <authorList>
            <person name="Saren A.M."/>
            <person name="Ravantti J.J."/>
            <person name="Benson S.D."/>
            <person name="Burnett R.M."/>
            <person name="Paulin L."/>
            <person name="Bamford D.H."/>
            <person name="Bamford J.K.H."/>
        </authorList>
    </citation>
    <scope>NUCLEOTIDE SEQUENCE [GENOMIC DNA]</scope>
</reference>
<sequence length="94" mass="10461">MEKQTENTRPECPKAFYFVSIPGDFGQTPFASSLMYGSTALAAVYQVKGAIRVVSEHFDLRFADNGFTPAGVTQAEWLGKLITETFGFRLELFL</sequence>
<organism>
    <name type="scientific">Enterobacteria phage PRD1</name>
    <name type="common">Bacteriophage PRD1</name>
    <dbReference type="NCBI Taxonomy" id="10658"/>
    <lineage>
        <taxon>Viruses</taxon>
        <taxon>Varidnaviria</taxon>
        <taxon>Bamfordvirae</taxon>
        <taxon>Preplasmiviricota</taxon>
        <taxon>Tectiliviricetes</taxon>
        <taxon>Kalamavirales</taxon>
        <taxon>Tectiviridae</taxon>
        <taxon>Alphatectivirus</taxon>
        <taxon>Alphatectivirus PRD1</taxon>
    </lineage>
</organism>
<keyword id="KW-0238">DNA-binding</keyword>
<keyword id="KW-0244">Early protein</keyword>
<keyword id="KW-0547">Nucleotide-binding</keyword>
<keyword id="KW-1185">Reference proteome</keyword>
<gene>
    <name type="primary">XIX</name>
</gene>
<evidence type="ECO:0000305" key="1"/>
<proteinExistence type="predicted"/>
<name>VP19_BPPRD</name>
<protein>
    <recommendedName>
        <fullName>Protein P19</fullName>
    </recommendedName>
</protein>